<keyword id="KW-0067">ATP-binding</keyword>
<keyword id="KW-0963">Cytoplasm</keyword>
<keyword id="KW-0436">Ligase</keyword>
<keyword id="KW-0547">Nucleotide-binding</keyword>
<keyword id="KW-0566">Pantothenate biosynthesis</keyword>
<proteinExistence type="inferred from homology"/>
<name>PANC_COXB1</name>
<protein>
    <recommendedName>
        <fullName evidence="1">Pantothenate synthetase</fullName>
        <shortName evidence="1">PS</shortName>
        <ecNumber evidence="1">6.3.2.1</ecNumber>
    </recommendedName>
    <alternativeName>
        <fullName evidence="1">Pantoate--beta-alanine ligase</fullName>
    </alternativeName>
    <alternativeName>
        <fullName evidence="1">Pantoate-activating enzyme</fullName>
    </alternativeName>
</protein>
<dbReference type="EC" id="6.3.2.1" evidence="1"/>
<dbReference type="EMBL" id="CP001020">
    <property type="protein sequence ID" value="ACJ20793.1"/>
    <property type="molecule type" value="Genomic_DNA"/>
</dbReference>
<dbReference type="RefSeq" id="WP_005771941.1">
    <property type="nucleotide sequence ID" value="NC_011528.1"/>
</dbReference>
<dbReference type="SMR" id="B6J9H9"/>
<dbReference type="KEGG" id="cbc:CbuK_1645"/>
<dbReference type="HOGENOM" id="CLU_047148_0_0_6"/>
<dbReference type="UniPathway" id="UPA00028">
    <property type="reaction ID" value="UER00005"/>
</dbReference>
<dbReference type="GO" id="GO:0005829">
    <property type="term" value="C:cytosol"/>
    <property type="evidence" value="ECO:0007669"/>
    <property type="project" value="TreeGrafter"/>
</dbReference>
<dbReference type="GO" id="GO:0005524">
    <property type="term" value="F:ATP binding"/>
    <property type="evidence" value="ECO:0007669"/>
    <property type="project" value="UniProtKB-KW"/>
</dbReference>
<dbReference type="GO" id="GO:0004592">
    <property type="term" value="F:pantoate-beta-alanine ligase activity"/>
    <property type="evidence" value="ECO:0007669"/>
    <property type="project" value="UniProtKB-UniRule"/>
</dbReference>
<dbReference type="GO" id="GO:0015940">
    <property type="term" value="P:pantothenate biosynthetic process"/>
    <property type="evidence" value="ECO:0007669"/>
    <property type="project" value="UniProtKB-UniRule"/>
</dbReference>
<dbReference type="Gene3D" id="3.40.50.620">
    <property type="entry name" value="HUPs"/>
    <property type="match status" value="1"/>
</dbReference>
<dbReference type="Gene3D" id="3.30.1300.10">
    <property type="entry name" value="Pantoate-beta-alanine ligase, C-terminal domain"/>
    <property type="match status" value="1"/>
</dbReference>
<dbReference type="HAMAP" id="MF_00158">
    <property type="entry name" value="PanC"/>
    <property type="match status" value="1"/>
</dbReference>
<dbReference type="InterPro" id="IPR003721">
    <property type="entry name" value="Pantoate_ligase"/>
</dbReference>
<dbReference type="InterPro" id="IPR042176">
    <property type="entry name" value="Pantoate_ligase_C"/>
</dbReference>
<dbReference type="InterPro" id="IPR014729">
    <property type="entry name" value="Rossmann-like_a/b/a_fold"/>
</dbReference>
<dbReference type="NCBIfam" id="TIGR00018">
    <property type="entry name" value="panC"/>
    <property type="match status" value="1"/>
</dbReference>
<dbReference type="PANTHER" id="PTHR21299">
    <property type="entry name" value="CYTIDYLATE KINASE/PANTOATE-BETA-ALANINE LIGASE"/>
    <property type="match status" value="1"/>
</dbReference>
<dbReference type="PANTHER" id="PTHR21299:SF1">
    <property type="entry name" value="PANTOATE--BETA-ALANINE LIGASE"/>
    <property type="match status" value="1"/>
</dbReference>
<dbReference type="Pfam" id="PF02569">
    <property type="entry name" value="Pantoate_ligase"/>
    <property type="match status" value="1"/>
</dbReference>
<dbReference type="SUPFAM" id="SSF52374">
    <property type="entry name" value="Nucleotidylyl transferase"/>
    <property type="match status" value="1"/>
</dbReference>
<organism>
    <name type="scientific">Coxiella burnetii (strain CbuK_Q154)</name>
    <name type="common">Coxiella burnetii (strain Q154)</name>
    <dbReference type="NCBI Taxonomy" id="434924"/>
    <lineage>
        <taxon>Bacteria</taxon>
        <taxon>Pseudomonadati</taxon>
        <taxon>Pseudomonadota</taxon>
        <taxon>Gammaproteobacteria</taxon>
        <taxon>Legionellales</taxon>
        <taxon>Coxiellaceae</taxon>
        <taxon>Coxiella</taxon>
    </lineage>
</organism>
<gene>
    <name evidence="1" type="primary">panC</name>
    <name type="ordered locus">CbuK_1645</name>
</gene>
<comment type="function">
    <text evidence="1">Catalyzes the condensation of pantoate with beta-alanine in an ATP-dependent reaction via a pantoyl-adenylate intermediate.</text>
</comment>
<comment type="catalytic activity">
    <reaction evidence="1">
        <text>(R)-pantoate + beta-alanine + ATP = (R)-pantothenate + AMP + diphosphate + H(+)</text>
        <dbReference type="Rhea" id="RHEA:10912"/>
        <dbReference type="ChEBI" id="CHEBI:15378"/>
        <dbReference type="ChEBI" id="CHEBI:15980"/>
        <dbReference type="ChEBI" id="CHEBI:29032"/>
        <dbReference type="ChEBI" id="CHEBI:30616"/>
        <dbReference type="ChEBI" id="CHEBI:33019"/>
        <dbReference type="ChEBI" id="CHEBI:57966"/>
        <dbReference type="ChEBI" id="CHEBI:456215"/>
        <dbReference type="EC" id="6.3.2.1"/>
    </reaction>
</comment>
<comment type="pathway">
    <text evidence="1">Cofactor biosynthesis; (R)-pantothenate biosynthesis; (R)-pantothenate from (R)-pantoate and beta-alanine: step 1/1.</text>
</comment>
<comment type="subunit">
    <text evidence="1">Homodimer.</text>
</comment>
<comment type="subcellular location">
    <subcellularLocation>
        <location evidence="1">Cytoplasm</location>
    </subcellularLocation>
</comment>
<comment type="miscellaneous">
    <text evidence="1">The reaction proceeds by a bi uni uni bi ping pong mechanism.</text>
</comment>
<comment type="similarity">
    <text evidence="1">Belongs to the pantothenate synthetase family.</text>
</comment>
<accession>B6J9H9</accession>
<feature type="chain" id="PRO_1000097053" description="Pantothenate synthetase">
    <location>
        <begin position="1"/>
        <end position="257"/>
    </location>
</feature>
<feature type="active site" description="Proton donor" evidence="1">
    <location>
        <position position="36"/>
    </location>
</feature>
<feature type="binding site" evidence="1">
    <location>
        <begin position="29"/>
        <end position="36"/>
    </location>
    <ligand>
        <name>ATP</name>
        <dbReference type="ChEBI" id="CHEBI:30616"/>
    </ligand>
</feature>
<feature type="binding site" evidence="1">
    <location>
        <position position="60"/>
    </location>
    <ligand>
        <name>(R)-pantoate</name>
        <dbReference type="ChEBI" id="CHEBI:15980"/>
    </ligand>
</feature>
<feature type="binding site" evidence="1">
    <location>
        <position position="60"/>
    </location>
    <ligand>
        <name>beta-alanine</name>
        <dbReference type="ChEBI" id="CHEBI:57966"/>
    </ligand>
</feature>
<feature type="binding site" evidence="1">
    <location>
        <begin position="145"/>
        <end position="148"/>
    </location>
    <ligand>
        <name>ATP</name>
        <dbReference type="ChEBI" id="CHEBI:30616"/>
    </ligand>
</feature>
<feature type="binding site" evidence="1">
    <location>
        <position position="151"/>
    </location>
    <ligand>
        <name>(R)-pantoate</name>
        <dbReference type="ChEBI" id="CHEBI:15980"/>
    </ligand>
</feature>
<feature type="binding site" evidence="1">
    <location>
        <position position="174"/>
    </location>
    <ligand>
        <name>ATP</name>
        <dbReference type="ChEBI" id="CHEBI:30616"/>
    </ligand>
</feature>
<feature type="binding site" evidence="1">
    <location>
        <begin position="182"/>
        <end position="185"/>
    </location>
    <ligand>
        <name>ATP</name>
        <dbReference type="ChEBI" id="CHEBI:30616"/>
    </ligand>
</feature>
<evidence type="ECO:0000255" key="1">
    <source>
        <dbReference type="HAMAP-Rule" id="MF_00158"/>
    </source>
</evidence>
<sequence>MTKVIEALSDWQSIRKTINDLSVGFVPTMGNLHAGHLSLLERSKCENTITVLSLFINPTQFNDKNDFKNYPRTLAQDIAMAEENGIDYVLAPTDDALYPDQYAYKITNSTINNQEAEFRPRHFDGVLTVVMKLLLLVKPTRAYFGEKDYQQLQLVKGLAEAFFLDTEIIGCKIVRNEFGLPLSSRNRRLTEDQYQLAQRFSEIFHSDLSCDEIKNALIQEGIIVDYIEDYNERRFAAVHVGDIRLIDNIPFAKDKKC</sequence>
<reference key="1">
    <citation type="journal article" date="2009" name="Infect. Immun.">
        <title>Comparative genomics reveal extensive transposon-mediated genomic plasticity and diversity among potential effector proteins within the genus Coxiella.</title>
        <authorList>
            <person name="Beare P.A."/>
            <person name="Unsworth N."/>
            <person name="Andoh M."/>
            <person name="Voth D.E."/>
            <person name="Omsland A."/>
            <person name="Gilk S.D."/>
            <person name="Williams K.P."/>
            <person name="Sobral B.W."/>
            <person name="Kupko J.J. III"/>
            <person name="Porcella S.F."/>
            <person name="Samuel J.E."/>
            <person name="Heinzen R.A."/>
        </authorList>
    </citation>
    <scope>NUCLEOTIDE SEQUENCE [LARGE SCALE GENOMIC DNA]</scope>
    <source>
        <strain>CbuK_Q154</strain>
    </source>
</reference>